<evidence type="ECO:0000255" key="1"/>
<evidence type="ECO:0000269" key="2">
    <source>
    </source>
</evidence>
<evidence type="ECO:0000303" key="3">
    <source>
    </source>
</evidence>
<evidence type="ECO:0000305" key="4"/>
<evidence type="ECO:0000305" key="5">
    <source>
    </source>
</evidence>
<name>IACD_PESFW</name>
<organism>
    <name type="scientific">Pestalotiopsis fici (strain W106-1 / CGMCC3.15140)</name>
    <dbReference type="NCBI Taxonomy" id="1229662"/>
    <lineage>
        <taxon>Eukaryota</taxon>
        <taxon>Fungi</taxon>
        <taxon>Dikarya</taxon>
        <taxon>Ascomycota</taxon>
        <taxon>Pezizomycotina</taxon>
        <taxon>Sordariomycetes</taxon>
        <taxon>Xylariomycetidae</taxon>
        <taxon>Amphisphaeriales</taxon>
        <taxon>Sporocadaceae</taxon>
        <taxon>Pestalotiopsis</taxon>
    </lineage>
</organism>
<proteinExistence type="evidence at protein level"/>
<accession>A0A1J0HSQ1</accession>
<accession>W3XJ21</accession>
<dbReference type="EC" id="1.-.-.-" evidence="5"/>
<dbReference type="EMBL" id="KU963195">
    <property type="protein sequence ID" value="APC57596.1"/>
    <property type="molecule type" value="Genomic_DNA"/>
</dbReference>
<dbReference type="EMBL" id="KI912110">
    <property type="protein sequence ID" value="ETS86015.1"/>
    <property type="molecule type" value="Genomic_DNA"/>
</dbReference>
<dbReference type="RefSeq" id="XP_007830812.1">
    <property type="nucleotide sequence ID" value="XM_007832621.1"/>
</dbReference>
<dbReference type="SMR" id="A0A1J0HSQ1"/>
<dbReference type="GeneID" id="19269053"/>
<dbReference type="KEGG" id="pfy:PFICI_04040"/>
<dbReference type="eggNOG" id="ENOG502T57D">
    <property type="taxonomic scope" value="Eukaryota"/>
</dbReference>
<dbReference type="HOGENOM" id="CLU_115019_0_3_1"/>
<dbReference type="InParanoid" id="A0A1J0HSQ1"/>
<dbReference type="OMA" id="YTVTHYR"/>
<dbReference type="OrthoDB" id="3454835at2759"/>
<dbReference type="Proteomes" id="UP000030651">
    <property type="component" value="Unassembled WGS sequence"/>
</dbReference>
<dbReference type="GO" id="GO:0004497">
    <property type="term" value="F:monooxygenase activity"/>
    <property type="evidence" value="ECO:0007669"/>
    <property type="project" value="UniProtKB-KW"/>
</dbReference>
<dbReference type="Gene3D" id="3.30.70.100">
    <property type="match status" value="1"/>
</dbReference>
<dbReference type="InterPro" id="IPR011008">
    <property type="entry name" value="Dimeric_a/b-barrel"/>
</dbReference>
<dbReference type="InterPro" id="IPR009799">
    <property type="entry name" value="EthD_dom"/>
</dbReference>
<dbReference type="Pfam" id="PF07110">
    <property type="entry name" value="EthD"/>
    <property type="match status" value="1"/>
</dbReference>
<dbReference type="SUPFAM" id="SSF54909">
    <property type="entry name" value="Dimeric alpha+beta barrel"/>
    <property type="match status" value="1"/>
</dbReference>
<reference key="1">
    <citation type="journal article" date="2018" name="ACS Chem. Biol.">
        <title>Characterization of a prenyltransferase for iso-A82775C biosynthesis and generation of new congeners of chloropestolides.</title>
        <authorList>
            <person name="Pan Y."/>
            <person name="Liu L."/>
            <person name="Guan F."/>
            <person name="Li E."/>
            <person name="Jin J."/>
            <person name="Li J."/>
            <person name="Che Y."/>
            <person name="Liu G."/>
        </authorList>
    </citation>
    <scope>NUCLEOTIDE SEQUENCE [GENOMIC DNA]</scope>
    <scope>FUNCTION</scope>
    <scope>DISRUPTION PHENOTYPE</scope>
    <scope>INDUCTION</scope>
    <scope>PATHWAY</scope>
    <scope>BIOTECHNOLOGY</scope>
    <source>
        <strain>W106-1 / CGMCC3.15140</strain>
    </source>
</reference>
<reference key="2">
    <citation type="journal article" date="2015" name="BMC Genomics">
        <title>Genomic and transcriptomic analysis of the endophytic fungus Pestalotiopsis fici reveals its lifestyle and high potential for synthesis of natural products.</title>
        <authorList>
            <person name="Wang X."/>
            <person name="Zhang X."/>
            <person name="Liu L."/>
            <person name="Xiang M."/>
            <person name="Wang W."/>
            <person name="Sun X."/>
            <person name="Che Y."/>
            <person name="Guo L."/>
            <person name="Liu G."/>
            <person name="Guo L."/>
            <person name="Wang C."/>
            <person name="Yin W.B."/>
            <person name="Stadler M."/>
            <person name="Zhang X."/>
            <person name="Liu X."/>
        </authorList>
    </citation>
    <scope>NUCLEOTIDE SEQUENCE [LARGE SCALE GENOMIC DNA]</scope>
    <source>
        <strain>W106-1 / CGMCC3.15140</strain>
    </source>
</reference>
<protein>
    <recommendedName>
        <fullName evidence="3">Dehydratase iacD</fullName>
        <ecNumber evidence="5">1.-.-.-</ecNumber>
    </recommendedName>
    <alternativeName>
        <fullName evidence="3">Iso-A82775C biosynthesis cluster protein D</fullName>
    </alternativeName>
</protein>
<feature type="chain" id="PRO_0000451384" description="Dehydratase iacD">
    <location>
        <begin position="1"/>
        <end position="138"/>
    </location>
</feature>
<feature type="domain" description="EthD" evidence="1">
    <location>
        <begin position="18"/>
        <end position="113"/>
    </location>
</feature>
<comment type="function">
    <text evidence="2 5">Dehydratase; part of the gene cluster that mediates the biosynthesis of iso-A82775C, a enylepoxycyclohexane and biosynthetic precursor of the chloropestolide anticancer natural products (PubMed:29384350). Within the cluster, the prenyltransferase iacE prenylates siccayne to generate pestalodiol E, using dimethylallyl diphosphate (DMAPP) as cosubstrate (PubMed:29384350). The probable oxidoreductase iacF is then involved in the epoxidation of pestalodiol F to pestalodiol F, which is further converted to pestalofone A by the short-chain dehydrogenase/reductase iacG (PubMed:29384350). Iso-A82775C is subsequently generated from pestalofone A by the short-chain dehydrogenase/reductase iacC (PubMed:29384350). Iso-A82775C is further condensed with maldoxin via a Diels-Alder reaction to produce the anticancer natural products chloropestolides A to E (Probable).</text>
</comment>
<comment type="pathway">
    <text evidence="5">Secondary metabolite biosynthesis.</text>
</comment>
<comment type="induction">
    <text evidence="2">Expression is co-regulated with the other genes from the iso-A82775C biosynthesis cluster and probably controlled by the cluster-specific transcription factors iacI and iacK.</text>
</comment>
<comment type="disruption phenotype">
    <text evidence="2">Reduces slightly the production of iso-A82775C.</text>
</comment>
<comment type="biotechnology">
    <text evidence="2">Iso-A82775C is a precursor for the biosynthesis of the anticancer natural products chloropestolides A to E via a Diesls-Alder reaction with maldoxin (PubMed:29384350). In the absence of the prenyltransferase iacE, siccayne accumulates instead of iso-A82775C and can also be condensed with maldoxin to produce chloropestolides H to K, which show also antibacterial and anticancer properties (PubMed:29384350).</text>
</comment>
<comment type="similarity">
    <text evidence="4">Belongs to the tpcK family.</text>
</comment>
<keyword id="KW-0503">Monooxygenase</keyword>
<keyword id="KW-0560">Oxidoreductase</keyword>
<keyword id="KW-1185">Reference proteome</keyword>
<gene>
    <name evidence="3" type="primary">iacD</name>
    <name type="ORF">PFICI_04040</name>
</gene>
<sequence>MAQQKVIKYTVEHNRKDGVSEEDFIEWFTNTLIPQMVPVMQKNNILKYAVHKTDHQISTAFQSQVDKVRPGWVVSKCDLILEHWVNDLGDIMKLSQDPEWAAALKDQDVWMDNSKSNIHIGYDTIYIEDGTITNVPRK</sequence>